<organism>
    <name type="scientific">Streptococcus pyogenes serotype M3 (strain SSI-1)</name>
    <dbReference type="NCBI Taxonomy" id="193567"/>
    <lineage>
        <taxon>Bacteria</taxon>
        <taxon>Bacillati</taxon>
        <taxon>Bacillota</taxon>
        <taxon>Bacilli</taxon>
        <taxon>Lactobacillales</taxon>
        <taxon>Streptococcaceae</taxon>
        <taxon>Streptococcus</taxon>
    </lineage>
</organism>
<feature type="chain" id="PRO_0000411494" description="Large ribosomal subunit protein uL16">
    <location>
        <begin position="1"/>
        <end position="137"/>
    </location>
</feature>
<accession>P0DE09</accession>
<accession>Q79YR7</accession>
<accession>Q7CFL2</accession>
<reference key="1">
    <citation type="journal article" date="2003" name="Genome Res.">
        <title>Genome sequence of an M3 strain of Streptococcus pyogenes reveals a large-scale genomic rearrangement in invasive strains and new insights into phage evolution.</title>
        <authorList>
            <person name="Nakagawa I."/>
            <person name="Kurokawa K."/>
            <person name="Yamashita A."/>
            <person name="Nakata M."/>
            <person name="Tomiyasu Y."/>
            <person name="Okahashi N."/>
            <person name="Kawabata S."/>
            <person name="Yamazaki K."/>
            <person name="Shiba T."/>
            <person name="Yasunaga T."/>
            <person name="Hayashi H."/>
            <person name="Hattori M."/>
            <person name="Hamada S."/>
        </authorList>
    </citation>
    <scope>NUCLEOTIDE SEQUENCE [LARGE SCALE GENOMIC DNA]</scope>
    <source>
        <strain>SSI-1</strain>
    </source>
</reference>
<evidence type="ECO:0000255" key="1">
    <source>
        <dbReference type="HAMAP-Rule" id="MF_01342"/>
    </source>
</evidence>
<evidence type="ECO:0000305" key="2"/>
<protein>
    <recommendedName>
        <fullName evidence="1">Large ribosomal subunit protein uL16</fullName>
    </recommendedName>
    <alternativeName>
        <fullName evidence="2">50S ribosomal protein L16</fullName>
    </alternativeName>
</protein>
<keyword id="KW-0687">Ribonucleoprotein</keyword>
<keyword id="KW-0689">Ribosomal protein</keyword>
<keyword id="KW-0694">RNA-binding</keyword>
<keyword id="KW-0699">rRNA-binding</keyword>
<keyword id="KW-0820">tRNA-binding</keyword>
<dbReference type="EMBL" id="BA000034">
    <property type="protein sequence ID" value="BAC63144.1"/>
    <property type="molecule type" value="Genomic_DNA"/>
</dbReference>
<dbReference type="RefSeq" id="WP_002986644.1">
    <property type="nucleotide sequence ID" value="NC_004606.1"/>
</dbReference>
<dbReference type="SMR" id="P0DE09"/>
<dbReference type="GeneID" id="69900033"/>
<dbReference type="KEGG" id="sps:SPs0049"/>
<dbReference type="HOGENOM" id="CLU_078858_2_1_9"/>
<dbReference type="GO" id="GO:0022625">
    <property type="term" value="C:cytosolic large ribosomal subunit"/>
    <property type="evidence" value="ECO:0007669"/>
    <property type="project" value="TreeGrafter"/>
</dbReference>
<dbReference type="GO" id="GO:0019843">
    <property type="term" value="F:rRNA binding"/>
    <property type="evidence" value="ECO:0007669"/>
    <property type="project" value="UniProtKB-UniRule"/>
</dbReference>
<dbReference type="GO" id="GO:0003735">
    <property type="term" value="F:structural constituent of ribosome"/>
    <property type="evidence" value="ECO:0007669"/>
    <property type="project" value="InterPro"/>
</dbReference>
<dbReference type="GO" id="GO:0000049">
    <property type="term" value="F:tRNA binding"/>
    <property type="evidence" value="ECO:0007669"/>
    <property type="project" value="UniProtKB-KW"/>
</dbReference>
<dbReference type="GO" id="GO:0006412">
    <property type="term" value="P:translation"/>
    <property type="evidence" value="ECO:0007669"/>
    <property type="project" value="UniProtKB-UniRule"/>
</dbReference>
<dbReference type="CDD" id="cd01433">
    <property type="entry name" value="Ribosomal_L16_L10e"/>
    <property type="match status" value="1"/>
</dbReference>
<dbReference type="FunFam" id="3.90.1170.10:FF:000001">
    <property type="entry name" value="50S ribosomal protein L16"/>
    <property type="match status" value="1"/>
</dbReference>
<dbReference type="Gene3D" id="3.90.1170.10">
    <property type="entry name" value="Ribosomal protein L10e/L16"/>
    <property type="match status" value="1"/>
</dbReference>
<dbReference type="HAMAP" id="MF_01342">
    <property type="entry name" value="Ribosomal_uL16"/>
    <property type="match status" value="1"/>
</dbReference>
<dbReference type="InterPro" id="IPR047873">
    <property type="entry name" value="Ribosomal_uL16"/>
</dbReference>
<dbReference type="InterPro" id="IPR000114">
    <property type="entry name" value="Ribosomal_uL16_bact-type"/>
</dbReference>
<dbReference type="InterPro" id="IPR020798">
    <property type="entry name" value="Ribosomal_uL16_CS"/>
</dbReference>
<dbReference type="InterPro" id="IPR016180">
    <property type="entry name" value="Ribosomal_uL16_dom"/>
</dbReference>
<dbReference type="InterPro" id="IPR036920">
    <property type="entry name" value="Ribosomal_uL16_sf"/>
</dbReference>
<dbReference type="NCBIfam" id="TIGR01164">
    <property type="entry name" value="rplP_bact"/>
    <property type="match status" value="1"/>
</dbReference>
<dbReference type="PANTHER" id="PTHR12220">
    <property type="entry name" value="50S/60S RIBOSOMAL PROTEIN L16"/>
    <property type="match status" value="1"/>
</dbReference>
<dbReference type="PANTHER" id="PTHR12220:SF13">
    <property type="entry name" value="LARGE RIBOSOMAL SUBUNIT PROTEIN UL16M"/>
    <property type="match status" value="1"/>
</dbReference>
<dbReference type="Pfam" id="PF00252">
    <property type="entry name" value="Ribosomal_L16"/>
    <property type="match status" value="1"/>
</dbReference>
<dbReference type="PRINTS" id="PR00060">
    <property type="entry name" value="RIBOSOMALL16"/>
</dbReference>
<dbReference type="SUPFAM" id="SSF54686">
    <property type="entry name" value="Ribosomal protein L16p/L10e"/>
    <property type="match status" value="1"/>
</dbReference>
<dbReference type="PROSITE" id="PS00586">
    <property type="entry name" value="RIBOSOMAL_L16_1"/>
    <property type="match status" value="1"/>
</dbReference>
<dbReference type="PROSITE" id="PS00701">
    <property type="entry name" value="RIBOSOMAL_L16_2"/>
    <property type="match status" value="1"/>
</dbReference>
<comment type="function">
    <text evidence="1">Binds 23S rRNA and is also seen to make contacts with the A and possibly P site tRNAs.</text>
</comment>
<comment type="subunit">
    <text evidence="1">Part of the 50S ribosomal subunit.</text>
</comment>
<comment type="similarity">
    <text evidence="1">Belongs to the universal ribosomal protein uL16 family.</text>
</comment>
<proteinExistence type="inferred from homology"/>
<sequence>MLVPKRVKHRREFRGKMRGEAKGGKEVSFGEYGLQATTSHWITNRQIEAARIAMTRYMKRGGKVWIKIFPHKSYTAKAIGVRMGSGKGAPEGWVAPVKRGKVMFEIAGVSEEIAREALRLASHKLPVKCKFVKREAE</sequence>
<gene>
    <name evidence="1" type="primary">rplP</name>
    <name type="ordered locus">SPs0049</name>
</gene>
<name>RL16_STRPQ</name>